<sequence>MKNVLSIQSHVVYGFAGNKSATFPMQLLGVDVWALNTVQFSNHTQYGKWTGMVIPQEQIREIVTGLDNIEKLQECDALLSGYLGSAEQVDQILFALEQIKLRNPNALYLCDPVMPHPKKSCVVANGVCEALIEKAIPVADIMTPNLHELRQLTEFPINTFDDVLKAVNALIAKGVKKVLVKHLGSAGKINDPDTFEIIMATPEGVWHLSRPLYQFNFEPVGVGDLIAGTFLANLLNGKSDVEAFEAMNNEVAGVMKTTFELGSYELQTIAARFEILNPSSNYKAEKVA</sequence>
<proteinExistence type="inferred from homology"/>
<feature type="chain" id="PRO_1000069885" description="Pyridoxal kinase PdxY">
    <location>
        <begin position="1"/>
        <end position="288"/>
    </location>
</feature>
<feature type="binding site" evidence="1">
    <location>
        <position position="9"/>
    </location>
    <ligand>
        <name>substrate</name>
    </ligand>
</feature>
<feature type="binding site" evidence="1">
    <location>
        <begin position="44"/>
        <end position="45"/>
    </location>
    <ligand>
        <name>substrate</name>
    </ligand>
</feature>
<feature type="binding site" evidence="1">
    <location>
        <position position="111"/>
    </location>
    <ligand>
        <name>ATP</name>
        <dbReference type="ChEBI" id="CHEBI:30616"/>
    </ligand>
</feature>
<feature type="binding site" evidence="1">
    <location>
        <position position="148"/>
    </location>
    <ligand>
        <name>ATP</name>
        <dbReference type="ChEBI" id="CHEBI:30616"/>
    </ligand>
</feature>
<feature type="binding site" evidence="1">
    <location>
        <position position="181"/>
    </location>
    <ligand>
        <name>ATP</name>
        <dbReference type="ChEBI" id="CHEBI:30616"/>
    </ligand>
</feature>
<feature type="binding site" evidence="1">
    <location>
        <position position="224"/>
    </location>
    <ligand>
        <name>substrate</name>
    </ligand>
</feature>
<keyword id="KW-0067">ATP-binding</keyword>
<keyword id="KW-0418">Kinase</keyword>
<keyword id="KW-0460">Magnesium</keyword>
<keyword id="KW-0547">Nucleotide-binding</keyword>
<keyword id="KW-0808">Transferase</keyword>
<reference key="1">
    <citation type="journal article" date="2007" name="Genome Biol.">
        <title>Characterization and modeling of the Haemophilus influenzae core and supragenomes based on the complete genomic sequences of Rd and 12 clinical nontypeable strains.</title>
        <authorList>
            <person name="Hogg J.S."/>
            <person name="Hu F.Z."/>
            <person name="Janto B."/>
            <person name="Boissy R."/>
            <person name="Hayes J."/>
            <person name="Keefe R."/>
            <person name="Post J.C."/>
            <person name="Ehrlich G.D."/>
        </authorList>
    </citation>
    <scope>NUCLEOTIDE SEQUENCE [LARGE SCALE GENOMIC DNA]</scope>
    <source>
        <strain>PittEE</strain>
    </source>
</reference>
<gene>
    <name evidence="1" type="primary">pdxY</name>
    <name type="ordered locus">CGSHiEE_00970</name>
</gene>
<name>PDXY_HAEIE</name>
<protein>
    <recommendedName>
        <fullName evidence="1">Pyridoxal kinase PdxY</fullName>
        <shortName evidence="1">PL kinase</shortName>
        <ecNumber evidence="1">2.7.1.35</ecNumber>
    </recommendedName>
</protein>
<accession>A5UA83</accession>
<organism>
    <name type="scientific">Haemophilus influenzae (strain PittEE)</name>
    <dbReference type="NCBI Taxonomy" id="374930"/>
    <lineage>
        <taxon>Bacteria</taxon>
        <taxon>Pseudomonadati</taxon>
        <taxon>Pseudomonadota</taxon>
        <taxon>Gammaproteobacteria</taxon>
        <taxon>Pasteurellales</taxon>
        <taxon>Pasteurellaceae</taxon>
        <taxon>Haemophilus</taxon>
    </lineage>
</organism>
<evidence type="ECO:0000255" key="1">
    <source>
        <dbReference type="HAMAP-Rule" id="MF_01639"/>
    </source>
</evidence>
<comment type="function">
    <text evidence="1">Pyridoxal kinase involved in the salvage pathway of pyridoxal 5'-phosphate (PLP). Catalyzes the phosphorylation of pyridoxal to PLP.</text>
</comment>
<comment type="catalytic activity">
    <reaction evidence="1">
        <text>pyridoxal + ATP = pyridoxal 5'-phosphate + ADP + H(+)</text>
        <dbReference type="Rhea" id="RHEA:10224"/>
        <dbReference type="ChEBI" id="CHEBI:15378"/>
        <dbReference type="ChEBI" id="CHEBI:17310"/>
        <dbReference type="ChEBI" id="CHEBI:30616"/>
        <dbReference type="ChEBI" id="CHEBI:456216"/>
        <dbReference type="ChEBI" id="CHEBI:597326"/>
        <dbReference type="EC" id="2.7.1.35"/>
    </reaction>
</comment>
<comment type="cofactor">
    <cofactor evidence="1">
        <name>Mg(2+)</name>
        <dbReference type="ChEBI" id="CHEBI:18420"/>
    </cofactor>
</comment>
<comment type="pathway">
    <text evidence="1">Cofactor metabolism; pyridoxal 5'-phosphate salvage; pyridoxal 5'-phosphate from pyridoxal: step 1/1.</text>
</comment>
<comment type="subunit">
    <text evidence="1">Homodimer.</text>
</comment>
<comment type="similarity">
    <text evidence="1">Belongs to the pyridoxine kinase family. PdxY subfamily.</text>
</comment>
<dbReference type="EC" id="2.7.1.35" evidence="1"/>
<dbReference type="EMBL" id="CP000671">
    <property type="protein sequence ID" value="ABQ97684.1"/>
    <property type="molecule type" value="Genomic_DNA"/>
</dbReference>
<dbReference type="SMR" id="A5UA83"/>
<dbReference type="KEGG" id="hip:CGSHiEE_00970"/>
<dbReference type="HOGENOM" id="CLU_046496_3_0_6"/>
<dbReference type="UniPathway" id="UPA01068">
    <property type="reaction ID" value="UER00298"/>
</dbReference>
<dbReference type="GO" id="GO:0005829">
    <property type="term" value="C:cytosol"/>
    <property type="evidence" value="ECO:0007669"/>
    <property type="project" value="TreeGrafter"/>
</dbReference>
<dbReference type="GO" id="GO:0005524">
    <property type="term" value="F:ATP binding"/>
    <property type="evidence" value="ECO:0007669"/>
    <property type="project" value="UniProtKB-UniRule"/>
</dbReference>
<dbReference type="GO" id="GO:0000287">
    <property type="term" value="F:magnesium ion binding"/>
    <property type="evidence" value="ECO:0007669"/>
    <property type="project" value="UniProtKB-UniRule"/>
</dbReference>
<dbReference type="GO" id="GO:0008478">
    <property type="term" value="F:pyridoxal kinase activity"/>
    <property type="evidence" value="ECO:0007669"/>
    <property type="project" value="UniProtKB-UniRule"/>
</dbReference>
<dbReference type="GO" id="GO:0009443">
    <property type="term" value="P:pyridoxal 5'-phosphate salvage"/>
    <property type="evidence" value="ECO:0007669"/>
    <property type="project" value="UniProtKB-UniRule"/>
</dbReference>
<dbReference type="CDD" id="cd01173">
    <property type="entry name" value="pyridoxal_pyridoxamine_kinase"/>
    <property type="match status" value="1"/>
</dbReference>
<dbReference type="FunFam" id="3.40.1190.20:FF:000008">
    <property type="entry name" value="Pyridoxal kinase PdxY"/>
    <property type="match status" value="1"/>
</dbReference>
<dbReference type="Gene3D" id="3.40.1190.20">
    <property type="match status" value="1"/>
</dbReference>
<dbReference type="HAMAP" id="MF_01639">
    <property type="entry name" value="PdxY"/>
    <property type="match status" value="1"/>
</dbReference>
<dbReference type="InterPro" id="IPR013749">
    <property type="entry name" value="PM/HMP-P_kinase-1"/>
</dbReference>
<dbReference type="InterPro" id="IPR004625">
    <property type="entry name" value="PyrdxlKinase"/>
</dbReference>
<dbReference type="InterPro" id="IPR023685">
    <property type="entry name" value="Pyridoxal_kinase_PdxY"/>
</dbReference>
<dbReference type="InterPro" id="IPR029056">
    <property type="entry name" value="Ribokinase-like"/>
</dbReference>
<dbReference type="NCBIfam" id="NF004398">
    <property type="entry name" value="PRK05756.1"/>
    <property type="match status" value="1"/>
</dbReference>
<dbReference type="NCBIfam" id="TIGR00687">
    <property type="entry name" value="pyridox_kin"/>
    <property type="match status" value="1"/>
</dbReference>
<dbReference type="PANTHER" id="PTHR10534">
    <property type="entry name" value="PYRIDOXAL KINASE"/>
    <property type="match status" value="1"/>
</dbReference>
<dbReference type="PANTHER" id="PTHR10534:SF2">
    <property type="entry name" value="PYRIDOXAL KINASE"/>
    <property type="match status" value="1"/>
</dbReference>
<dbReference type="Pfam" id="PF08543">
    <property type="entry name" value="Phos_pyr_kin"/>
    <property type="match status" value="1"/>
</dbReference>
<dbReference type="SUPFAM" id="SSF53613">
    <property type="entry name" value="Ribokinase-like"/>
    <property type="match status" value="1"/>
</dbReference>